<feature type="chain" id="PRO_0000132056" description="Large ribosomal subunit protein eL14">
    <location>
        <begin position="1"/>
        <end position="96"/>
    </location>
</feature>
<feature type="strand" evidence="3">
    <location>
        <begin position="3"/>
        <end position="5"/>
    </location>
</feature>
<feature type="strand" evidence="3">
    <location>
        <begin position="8"/>
        <end position="11"/>
    </location>
</feature>
<feature type="strand" evidence="3">
    <location>
        <begin position="13"/>
        <end position="16"/>
    </location>
</feature>
<feature type="strand" evidence="3">
    <location>
        <begin position="21"/>
        <end position="27"/>
    </location>
</feature>
<feature type="strand" evidence="3">
    <location>
        <begin position="29"/>
        <end position="31"/>
    </location>
</feature>
<feature type="strand" evidence="3">
    <location>
        <begin position="33"/>
        <end position="36"/>
    </location>
</feature>
<feature type="turn" evidence="3">
    <location>
        <begin position="39"/>
        <end position="42"/>
    </location>
</feature>
<feature type="strand" evidence="3">
    <location>
        <begin position="47"/>
        <end position="50"/>
    </location>
</feature>
<feature type="strand" evidence="3">
    <location>
        <begin position="55"/>
        <end position="60"/>
    </location>
</feature>
<feature type="helix" evidence="3">
    <location>
        <begin position="69"/>
        <end position="78"/>
    </location>
</feature>
<feature type="helix" evidence="3">
    <location>
        <begin position="82"/>
        <end position="86"/>
    </location>
</feature>
<feature type="strand" evidence="4">
    <location>
        <begin position="89"/>
        <end position="91"/>
    </location>
</feature>
<comment type="similarity">
    <text evidence="1">Belongs to the eukaryotic ribosomal protein eL14 family.</text>
</comment>
<keyword id="KW-0002">3D-structure</keyword>
<keyword id="KW-1185">Reference proteome</keyword>
<keyword id="KW-0687">Ribonucleoprotein</keyword>
<keyword id="KW-0689">Ribosomal protein</keyword>
<sequence length="96" mass="10861">MPAIEVGRICVKVKGREAGSKCVIVDIIDDNFVLVTGPKDITGVKRRRVNILHLEPTDKKIDIQKGASDEEVKKKLEESNLTEYMKEKIKIRMPTL</sequence>
<proteinExistence type="evidence at protein level"/>
<accession>Q980C1</accession>
<name>RL14E_SACS2</name>
<reference key="1">
    <citation type="journal article" date="2001" name="Proc. Natl. Acad. Sci. U.S.A.">
        <title>The complete genome of the crenarchaeon Sulfolobus solfataricus P2.</title>
        <authorList>
            <person name="She Q."/>
            <person name="Singh R.K."/>
            <person name="Confalonieri F."/>
            <person name="Zivanovic Y."/>
            <person name="Allard G."/>
            <person name="Awayez M.J."/>
            <person name="Chan-Weiher C.C.-Y."/>
            <person name="Clausen I.G."/>
            <person name="Curtis B.A."/>
            <person name="De Moors A."/>
            <person name="Erauso G."/>
            <person name="Fletcher C."/>
            <person name="Gordon P.M.K."/>
            <person name="Heikamp-de Jong I."/>
            <person name="Jeffries A.C."/>
            <person name="Kozera C.J."/>
            <person name="Medina N."/>
            <person name="Peng X."/>
            <person name="Thi-Ngoc H.P."/>
            <person name="Redder P."/>
            <person name="Schenk M.E."/>
            <person name="Theriault C."/>
            <person name="Tolstrup N."/>
            <person name="Charlebois R.L."/>
            <person name="Doolittle W.F."/>
            <person name="Duguet M."/>
            <person name="Gaasterland T."/>
            <person name="Garrett R.A."/>
            <person name="Ragan M.A."/>
            <person name="Sensen C.W."/>
            <person name="Van der Oost J."/>
        </authorList>
    </citation>
    <scope>NUCLEOTIDE SEQUENCE [LARGE SCALE GENOMIC DNA]</scope>
    <source>
        <strain>ATCC 35092 / DSM 1617 / JCM 11322 / P2</strain>
    </source>
</reference>
<evidence type="ECO:0000255" key="1">
    <source>
        <dbReference type="HAMAP-Rule" id="MF_00721"/>
    </source>
</evidence>
<evidence type="ECO:0000305" key="2"/>
<evidence type="ECO:0007829" key="3">
    <source>
        <dbReference type="PDB" id="2JOY"/>
    </source>
</evidence>
<evidence type="ECO:0007829" key="4">
    <source>
        <dbReference type="PDB" id="2KDS"/>
    </source>
</evidence>
<dbReference type="EMBL" id="AE006641">
    <property type="protein sequence ID" value="AAK40722.1"/>
    <property type="molecule type" value="Genomic_DNA"/>
</dbReference>
<dbReference type="PIR" id="C90183">
    <property type="entry name" value="C90183"/>
</dbReference>
<dbReference type="RefSeq" id="WP_009988801.1">
    <property type="nucleotide sequence ID" value="NC_002754.1"/>
</dbReference>
<dbReference type="PDB" id="2JOY">
    <property type="method" value="NMR"/>
    <property type="chains" value="A=1-96"/>
</dbReference>
<dbReference type="PDB" id="2KDS">
    <property type="method" value="NMR"/>
    <property type="chains" value="A=2-96"/>
</dbReference>
<dbReference type="PDBsum" id="2JOY"/>
<dbReference type="PDBsum" id="2KDS"/>
<dbReference type="BMRB" id="Q980C1"/>
<dbReference type="SMR" id="Q980C1"/>
<dbReference type="FunCoup" id="Q980C1">
    <property type="interactions" value="149"/>
</dbReference>
<dbReference type="STRING" id="273057.SSO5763"/>
<dbReference type="PaxDb" id="273057-SSO5763"/>
<dbReference type="DNASU" id="1455532"/>
<dbReference type="EnsemblBacteria" id="AAK40722">
    <property type="protein sequence ID" value="AAK40722"/>
    <property type="gene ID" value="SSO5763"/>
</dbReference>
<dbReference type="KEGG" id="sso:SSO5763"/>
<dbReference type="PATRIC" id="fig|273057.12.peg.389"/>
<dbReference type="eggNOG" id="arCOG04167">
    <property type="taxonomic scope" value="Archaea"/>
</dbReference>
<dbReference type="HOGENOM" id="CLU_183474_0_0_2"/>
<dbReference type="InParanoid" id="Q980C1"/>
<dbReference type="PhylomeDB" id="Q980C1"/>
<dbReference type="EvolutionaryTrace" id="Q980C1"/>
<dbReference type="Proteomes" id="UP000001974">
    <property type="component" value="Chromosome"/>
</dbReference>
<dbReference type="GO" id="GO:0022625">
    <property type="term" value="C:cytosolic large ribosomal subunit"/>
    <property type="evidence" value="ECO:0000318"/>
    <property type="project" value="GO_Central"/>
</dbReference>
<dbReference type="GO" id="GO:0003723">
    <property type="term" value="F:RNA binding"/>
    <property type="evidence" value="ECO:0000318"/>
    <property type="project" value="GO_Central"/>
</dbReference>
<dbReference type="GO" id="GO:0003735">
    <property type="term" value="F:structural constituent of ribosome"/>
    <property type="evidence" value="ECO:0000318"/>
    <property type="project" value="GO_Central"/>
</dbReference>
<dbReference type="GO" id="GO:0042273">
    <property type="term" value="P:ribosomal large subunit biogenesis"/>
    <property type="evidence" value="ECO:0000318"/>
    <property type="project" value="GO_Central"/>
</dbReference>
<dbReference type="GO" id="GO:0006412">
    <property type="term" value="P:translation"/>
    <property type="evidence" value="ECO:0007669"/>
    <property type="project" value="UniProtKB-UniRule"/>
</dbReference>
<dbReference type="CDD" id="cd23702">
    <property type="entry name" value="eL14"/>
    <property type="match status" value="1"/>
</dbReference>
<dbReference type="FunFam" id="2.30.30.30:FF:000045">
    <property type="entry name" value="50S ribosomal protein L14e"/>
    <property type="match status" value="1"/>
</dbReference>
<dbReference type="Gene3D" id="2.30.30.30">
    <property type="match status" value="1"/>
</dbReference>
<dbReference type="HAMAP" id="MF_00721">
    <property type="entry name" value="Ribosomal_eL14"/>
    <property type="match status" value="1"/>
</dbReference>
<dbReference type="InterPro" id="IPR014722">
    <property type="entry name" value="Rib_uL2_dom2"/>
</dbReference>
<dbReference type="InterPro" id="IPR039660">
    <property type="entry name" value="Ribosomal_eL14"/>
</dbReference>
<dbReference type="InterPro" id="IPR023651">
    <property type="entry name" value="Ribosomal_eL14_arc"/>
</dbReference>
<dbReference type="InterPro" id="IPR008991">
    <property type="entry name" value="Translation_prot_SH3-like_sf"/>
</dbReference>
<dbReference type="NCBIfam" id="NF003320">
    <property type="entry name" value="PRK04333.1"/>
    <property type="match status" value="1"/>
</dbReference>
<dbReference type="PANTHER" id="PTHR11127">
    <property type="entry name" value="60S RIBOSOMAL PROTEIN L14"/>
    <property type="match status" value="1"/>
</dbReference>
<dbReference type="PANTHER" id="PTHR11127:SF2">
    <property type="entry name" value="LARGE RIBOSOMAL SUBUNIT PROTEIN EL14"/>
    <property type="match status" value="1"/>
</dbReference>
<dbReference type="SUPFAM" id="SSF50104">
    <property type="entry name" value="Translation proteins SH3-like domain"/>
    <property type="match status" value="1"/>
</dbReference>
<protein>
    <recommendedName>
        <fullName evidence="1">Large ribosomal subunit protein eL14</fullName>
    </recommendedName>
    <alternativeName>
        <fullName evidence="2">50S ribosomal protein L14e</fullName>
    </alternativeName>
</protein>
<gene>
    <name evidence="1" type="primary">rpl14e</name>
    <name type="ordered locus">SSO5763</name>
</gene>
<organism>
    <name type="scientific">Saccharolobus solfataricus (strain ATCC 35092 / DSM 1617 / JCM 11322 / P2)</name>
    <name type="common">Sulfolobus solfataricus</name>
    <dbReference type="NCBI Taxonomy" id="273057"/>
    <lineage>
        <taxon>Archaea</taxon>
        <taxon>Thermoproteota</taxon>
        <taxon>Thermoprotei</taxon>
        <taxon>Sulfolobales</taxon>
        <taxon>Sulfolobaceae</taxon>
        <taxon>Saccharolobus</taxon>
    </lineage>
</organism>